<feature type="chain" id="PRO_1000199979" description="Endoribonuclease YbeY">
    <location>
        <begin position="1"/>
        <end position="162"/>
    </location>
</feature>
<feature type="binding site" evidence="1">
    <location>
        <position position="118"/>
    </location>
    <ligand>
        <name>Zn(2+)</name>
        <dbReference type="ChEBI" id="CHEBI:29105"/>
        <note>catalytic</note>
    </ligand>
</feature>
<feature type="binding site" evidence="1">
    <location>
        <position position="122"/>
    </location>
    <ligand>
        <name>Zn(2+)</name>
        <dbReference type="ChEBI" id="CHEBI:29105"/>
        <note>catalytic</note>
    </ligand>
</feature>
<feature type="binding site" evidence="1">
    <location>
        <position position="128"/>
    </location>
    <ligand>
        <name>Zn(2+)</name>
        <dbReference type="ChEBI" id="CHEBI:29105"/>
        <note>catalytic</note>
    </ligand>
</feature>
<proteinExistence type="inferred from homology"/>
<evidence type="ECO:0000255" key="1">
    <source>
        <dbReference type="HAMAP-Rule" id="MF_00009"/>
    </source>
</evidence>
<reference key="1">
    <citation type="journal article" date="2009" name="J. Bacteriol.">
        <title>Complete genome sequence of Haemophilus parasuis SH0165.</title>
        <authorList>
            <person name="Yue M."/>
            <person name="Yang F."/>
            <person name="Yang J."/>
            <person name="Bei W."/>
            <person name="Cai X."/>
            <person name="Chen L."/>
            <person name="Dong J."/>
            <person name="Zhou R."/>
            <person name="Jin M."/>
            <person name="Jin Q."/>
            <person name="Chen H."/>
        </authorList>
    </citation>
    <scope>NUCLEOTIDE SEQUENCE [LARGE SCALE GENOMIC DNA]</scope>
    <source>
        <strain>SH0165</strain>
    </source>
</reference>
<keyword id="KW-0963">Cytoplasm</keyword>
<keyword id="KW-0255">Endonuclease</keyword>
<keyword id="KW-0378">Hydrolase</keyword>
<keyword id="KW-0479">Metal-binding</keyword>
<keyword id="KW-0540">Nuclease</keyword>
<keyword id="KW-1185">Reference proteome</keyword>
<keyword id="KW-0690">Ribosome biogenesis</keyword>
<keyword id="KW-0698">rRNA processing</keyword>
<keyword id="KW-0862">Zinc</keyword>
<sequence>MNLYIDLQIASENTVGLPTAAQFQHWVDKALAMEAKTADYPETEITIRIVDEAESHELNLTYRGKDKPTNVLSFPFEVPEGIQLPLLGDLIICRQVVEKEAVEQEKPLEAHWAHLAIHGTLHLLGYDHLTDEEAEEMESLETEIMQSLGFDDPYIAEKTIEE</sequence>
<name>YBEY_GLAP5</name>
<accession>B8F457</accession>
<organism>
    <name type="scientific">Glaesserella parasuis serovar 5 (strain SH0165)</name>
    <name type="common">Haemophilus parasuis</name>
    <dbReference type="NCBI Taxonomy" id="557723"/>
    <lineage>
        <taxon>Bacteria</taxon>
        <taxon>Pseudomonadati</taxon>
        <taxon>Pseudomonadota</taxon>
        <taxon>Gammaproteobacteria</taxon>
        <taxon>Pasteurellales</taxon>
        <taxon>Pasteurellaceae</taxon>
        <taxon>Glaesserella</taxon>
    </lineage>
</organism>
<protein>
    <recommendedName>
        <fullName evidence="1">Endoribonuclease YbeY</fullName>
        <ecNumber evidence="1">3.1.-.-</ecNumber>
    </recommendedName>
</protein>
<comment type="function">
    <text evidence="1">Single strand-specific metallo-endoribonuclease involved in late-stage 70S ribosome quality control and in maturation of the 3' terminus of the 16S rRNA.</text>
</comment>
<comment type="cofactor">
    <cofactor evidence="1">
        <name>Zn(2+)</name>
        <dbReference type="ChEBI" id="CHEBI:29105"/>
    </cofactor>
    <text evidence="1">Binds 1 zinc ion.</text>
</comment>
<comment type="subcellular location">
    <subcellularLocation>
        <location evidence="1">Cytoplasm</location>
    </subcellularLocation>
</comment>
<comment type="similarity">
    <text evidence="1">Belongs to the endoribonuclease YbeY family.</text>
</comment>
<gene>
    <name evidence="1" type="primary">ybeY</name>
    <name type="ordered locus">HAPS_0440</name>
</gene>
<dbReference type="EC" id="3.1.-.-" evidence="1"/>
<dbReference type="EMBL" id="CP001321">
    <property type="protein sequence ID" value="ACL32109.1"/>
    <property type="molecule type" value="Genomic_DNA"/>
</dbReference>
<dbReference type="RefSeq" id="WP_012621729.1">
    <property type="nucleotide sequence ID" value="NC_011852.1"/>
</dbReference>
<dbReference type="SMR" id="B8F457"/>
<dbReference type="STRING" id="557723.HAPS_0440"/>
<dbReference type="KEGG" id="hap:HAPS_0440"/>
<dbReference type="PATRIC" id="fig|557723.8.peg.444"/>
<dbReference type="HOGENOM" id="CLU_106710_0_1_6"/>
<dbReference type="Proteomes" id="UP000006743">
    <property type="component" value="Chromosome"/>
</dbReference>
<dbReference type="GO" id="GO:0005737">
    <property type="term" value="C:cytoplasm"/>
    <property type="evidence" value="ECO:0007669"/>
    <property type="project" value="UniProtKB-SubCell"/>
</dbReference>
<dbReference type="GO" id="GO:0004222">
    <property type="term" value="F:metalloendopeptidase activity"/>
    <property type="evidence" value="ECO:0007669"/>
    <property type="project" value="InterPro"/>
</dbReference>
<dbReference type="GO" id="GO:0004521">
    <property type="term" value="F:RNA endonuclease activity"/>
    <property type="evidence" value="ECO:0007669"/>
    <property type="project" value="UniProtKB-UniRule"/>
</dbReference>
<dbReference type="GO" id="GO:0008270">
    <property type="term" value="F:zinc ion binding"/>
    <property type="evidence" value="ECO:0007669"/>
    <property type="project" value="UniProtKB-UniRule"/>
</dbReference>
<dbReference type="GO" id="GO:0006364">
    <property type="term" value="P:rRNA processing"/>
    <property type="evidence" value="ECO:0007669"/>
    <property type="project" value="UniProtKB-UniRule"/>
</dbReference>
<dbReference type="Gene3D" id="3.40.390.30">
    <property type="entry name" value="Metalloproteases ('zincins'), catalytic domain"/>
    <property type="match status" value="1"/>
</dbReference>
<dbReference type="HAMAP" id="MF_00009">
    <property type="entry name" value="Endoribonucl_YbeY"/>
    <property type="match status" value="1"/>
</dbReference>
<dbReference type="InterPro" id="IPR023091">
    <property type="entry name" value="MetalPrtase_cat_dom_sf_prd"/>
</dbReference>
<dbReference type="InterPro" id="IPR002036">
    <property type="entry name" value="YbeY"/>
</dbReference>
<dbReference type="InterPro" id="IPR020549">
    <property type="entry name" value="YbeY_CS"/>
</dbReference>
<dbReference type="NCBIfam" id="TIGR00043">
    <property type="entry name" value="rRNA maturation RNase YbeY"/>
    <property type="match status" value="1"/>
</dbReference>
<dbReference type="PANTHER" id="PTHR46986">
    <property type="entry name" value="ENDORIBONUCLEASE YBEY, CHLOROPLASTIC"/>
    <property type="match status" value="1"/>
</dbReference>
<dbReference type="PANTHER" id="PTHR46986:SF1">
    <property type="entry name" value="ENDORIBONUCLEASE YBEY, CHLOROPLASTIC"/>
    <property type="match status" value="1"/>
</dbReference>
<dbReference type="Pfam" id="PF02130">
    <property type="entry name" value="YbeY"/>
    <property type="match status" value="1"/>
</dbReference>
<dbReference type="SUPFAM" id="SSF55486">
    <property type="entry name" value="Metalloproteases ('zincins'), catalytic domain"/>
    <property type="match status" value="1"/>
</dbReference>
<dbReference type="PROSITE" id="PS01306">
    <property type="entry name" value="UPF0054"/>
    <property type="match status" value="1"/>
</dbReference>